<keyword id="KW-0217">Developmental protein</keyword>
<keyword id="KW-0238">DNA-binding</keyword>
<keyword id="KW-0371">Homeobox</keyword>
<keyword id="KW-0539">Nucleus</keyword>
<keyword id="KW-0804">Transcription</keyword>
<keyword id="KW-0805">Transcription regulation</keyword>
<proteinExistence type="inferred from homology"/>
<gene>
    <name type="primary">hoxa11b</name>
</gene>
<organism>
    <name type="scientific">Devario aequipinnatus</name>
    <name type="common">Giant danio</name>
    <name type="synonym">Danio aequipinnatus</name>
    <dbReference type="NCBI Taxonomy" id="46778"/>
    <lineage>
        <taxon>Eukaryota</taxon>
        <taxon>Metazoa</taxon>
        <taxon>Chordata</taxon>
        <taxon>Craniata</taxon>
        <taxon>Vertebrata</taxon>
        <taxon>Euteleostomi</taxon>
        <taxon>Actinopterygii</taxon>
        <taxon>Neopterygii</taxon>
        <taxon>Teleostei</taxon>
        <taxon>Ostariophysi</taxon>
        <taxon>Cypriniformes</taxon>
        <taxon>Danionidae</taxon>
        <taxon>Danioninae</taxon>
        <taxon>Devario</taxon>
    </lineage>
</organism>
<name>HXABB_DEVAE</name>
<accession>Q9DDU2</accession>
<sequence length="283" mass="32401">MMDFDERVPVGSNMYLPGCTYYVSGTDFSSLPPFLPQTPSSCPMTYSYSTSSLPQVQSVREVSFRDYAIDTSSKWHSRGNLPHCYATEDMVHRDCLSNPGTLGDMLSKNNSVLYHSNTNHASNMYGNVGRNGVLPQAFDQFFETTYGNVENQPTDHPVDRTASKAPPPAESGSDSCRGTDETERCEETSSPEPSSGNNEEKFSGSSNGQKTRKKRCPYTKYQIRELEREFFFSVYINKEKRLQLSRMLNLTDRQVKIWFQNRRMKEKKLNRDRLQYYTTNPLL</sequence>
<feature type="chain" id="PRO_0000200100" description="Homeobox protein Hox-A11b">
    <location>
        <begin position="1"/>
        <end position="283"/>
    </location>
</feature>
<feature type="DNA-binding region" description="Homeobox" evidence="2">
    <location>
        <begin position="211"/>
        <end position="270"/>
    </location>
</feature>
<feature type="region of interest" description="Disordered" evidence="3">
    <location>
        <begin position="147"/>
        <end position="215"/>
    </location>
</feature>
<feature type="compositionally biased region" description="Basic and acidic residues" evidence="3">
    <location>
        <begin position="177"/>
        <end position="187"/>
    </location>
</feature>
<feature type="compositionally biased region" description="Low complexity" evidence="3">
    <location>
        <begin position="188"/>
        <end position="197"/>
    </location>
</feature>
<reference key="1">
    <citation type="journal article" date="2000" name="Mol. Phylogenet. Evol.">
        <title>Evolution of Hoxa-11 in lineages phylogenetically positioned along the fin-limb transition.</title>
        <authorList>
            <person name="Chiu C.-H."/>
            <person name="Nonaka D."/>
            <person name="Xue L."/>
            <person name="Amemiya C.T."/>
            <person name="Wagner G.P."/>
        </authorList>
    </citation>
    <scope>NUCLEOTIDE SEQUENCE [GENOMIC DNA]</scope>
</reference>
<dbReference type="EMBL" id="AF287136">
    <property type="protein sequence ID" value="AAG39067.1"/>
    <property type="molecule type" value="Genomic_DNA"/>
</dbReference>
<dbReference type="SMR" id="Q9DDU2"/>
<dbReference type="GO" id="GO:0005654">
    <property type="term" value="C:nucleoplasm"/>
    <property type="evidence" value="ECO:0007669"/>
    <property type="project" value="UniProtKB-ARBA"/>
</dbReference>
<dbReference type="GO" id="GO:0000981">
    <property type="term" value="F:DNA-binding transcription factor activity, RNA polymerase II-specific"/>
    <property type="evidence" value="ECO:0007669"/>
    <property type="project" value="InterPro"/>
</dbReference>
<dbReference type="GO" id="GO:0000978">
    <property type="term" value="F:RNA polymerase II cis-regulatory region sequence-specific DNA binding"/>
    <property type="evidence" value="ECO:0007669"/>
    <property type="project" value="TreeGrafter"/>
</dbReference>
<dbReference type="CDD" id="cd00086">
    <property type="entry name" value="homeodomain"/>
    <property type="match status" value="1"/>
</dbReference>
<dbReference type="FunFam" id="1.10.10.60:FF:000166">
    <property type="entry name" value="homeobox protein Hox-C11"/>
    <property type="match status" value="1"/>
</dbReference>
<dbReference type="Gene3D" id="1.10.10.60">
    <property type="entry name" value="Homeodomain-like"/>
    <property type="match status" value="1"/>
</dbReference>
<dbReference type="InterPro" id="IPR021918">
    <property type="entry name" value="DUF3528"/>
</dbReference>
<dbReference type="InterPro" id="IPR001356">
    <property type="entry name" value="HD"/>
</dbReference>
<dbReference type="InterPro" id="IPR020479">
    <property type="entry name" value="HD_metazoa"/>
</dbReference>
<dbReference type="InterPro" id="IPR017970">
    <property type="entry name" value="Homeobox_CS"/>
</dbReference>
<dbReference type="InterPro" id="IPR009057">
    <property type="entry name" value="Homeodomain-like_sf"/>
</dbReference>
<dbReference type="PANTHER" id="PTHR46092:SF3">
    <property type="entry name" value="HOMEOBOX PROTEIN HOX-A11"/>
    <property type="match status" value="1"/>
</dbReference>
<dbReference type="PANTHER" id="PTHR46092">
    <property type="entry name" value="HOMEOBOX PROTEIN HOX-A11-RELATED"/>
    <property type="match status" value="1"/>
</dbReference>
<dbReference type="Pfam" id="PF12045">
    <property type="entry name" value="DUF3528"/>
    <property type="match status" value="1"/>
</dbReference>
<dbReference type="Pfam" id="PF00046">
    <property type="entry name" value="Homeodomain"/>
    <property type="match status" value="1"/>
</dbReference>
<dbReference type="PRINTS" id="PR00024">
    <property type="entry name" value="HOMEOBOX"/>
</dbReference>
<dbReference type="SMART" id="SM00389">
    <property type="entry name" value="HOX"/>
    <property type="match status" value="1"/>
</dbReference>
<dbReference type="SUPFAM" id="SSF46689">
    <property type="entry name" value="Homeodomain-like"/>
    <property type="match status" value="1"/>
</dbReference>
<dbReference type="PROSITE" id="PS00027">
    <property type="entry name" value="HOMEOBOX_1"/>
    <property type="match status" value="1"/>
</dbReference>
<dbReference type="PROSITE" id="PS50071">
    <property type="entry name" value="HOMEOBOX_2"/>
    <property type="match status" value="1"/>
</dbReference>
<protein>
    <recommendedName>
        <fullName>Homeobox protein Hox-A11b</fullName>
    </recommendedName>
</protein>
<comment type="function">
    <text evidence="1">Sequence-specific transcription factor which is part of a developmental regulatory system that provides cells with specific positional identities on the anterior-posterior axis.</text>
</comment>
<comment type="subcellular location">
    <subcellularLocation>
        <location evidence="2">Nucleus</location>
    </subcellularLocation>
</comment>
<comment type="similarity">
    <text evidence="4">Belongs to the Abd-B homeobox family.</text>
</comment>
<evidence type="ECO:0000250" key="1"/>
<evidence type="ECO:0000255" key="2">
    <source>
        <dbReference type="PROSITE-ProRule" id="PRU00108"/>
    </source>
</evidence>
<evidence type="ECO:0000256" key="3">
    <source>
        <dbReference type="SAM" id="MobiDB-lite"/>
    </source>
</evidence>
<evidence type="ECO:0000305" key="4"/>